<gene>
    <name evidence="1" type="primary">dapE</name>
    <name type="ordered locus">XfasM23_0081</name>
</gene>
<reference key="1">
    <citation type="journal article" date="2010" name="J. Bacteriol.">
        <title>Whole genome sequences of two Xylella fastidiosa strains (M12 and M23) causing almond leaf scorch disease in California.</title>
        <authorList>
            <person name="Chen J."/>
            <person name="Xie G."/>
            <person name="Han S."/>
            <person name="Chertkov O."/>
            <person name="Sims D."/>
            <person name="Civerolo E.L."/>
        </authorList>
    </citation>
    <scope>NUCLEOTIDE SEQUENCE [LARGE SCALE GENOMIC DNA]</scope>
    <source>
        <strain>M23</strain>
    </source>
</reference>
<keyword id="KW-0028">Amino-acid biosynthesis</keyword>
<keyword id="KW-0170">Cobalt</keyword>
<keyword id="KW-0220">Diaminopimelate biosynthesis</keyword>
<keyword id="KW-0378">Hydrolase</keyword>
<keyword id="KW-0457">Lysine biosynthesis</keyword>
<keyword id="KW-0479">Metal-binding</keyword>
<keyword id="KW-0862">Zinc</keyword>
<organism>
    <name type="scientific">Xylella fastidiosa (strain M23)</name>
    <dbReference type="NCBI Taxonomy" id="405441"/>
    <lineage>
        <taxon>Bacteria</taxon>
        <taxon>Pseudomonadati</taxon>
        <taxon>Pseudomonadota</taxon>
        <taxon>Gammaproteobacteria</taxon>
        <taxon>Lysobacterales</taxon>
        <taxon>Lysobacteraceae</taxon>
        <taxon>Xylella</taxon>
    </lineage>
</organism>
<feature type="chain" id="PRO_0000375791" description="Succinyl-diaminopimelate desuccinylase">
    <location>
        <begin position="1"/>
        <end position="377"/>
    </location>
</feature>
<feature type="active site" evidence="1">
    <location>
        <position position="68"/>
    </location>
</feature>
<feature type="active site" description="Proton acceptor" evidence="1">
    <location>
        <position position="133"/>
    </location>
</feature>
<feature type="binding site" evidence="1">
    <location>
        <position position="66"/>
    </location>
    <ligand>
        <name>Zn(2+)</name>
        <dbReference type="ChEBI" id="CHEBI:29105"/>
        <label>1</label>
    </ligand>
</feature>
<feature type="binding site" evidence="1">
    <location>
        <position position="99"/>
    </location>
    <ligand>
        <name>Zn(2+)</name>
        <dbReference type="ChEBI" id="CHEBI:29105"/>
        <label>1</label>
    </ligand>
</feature>
<feature type="binding site" evidence="1">
    <location>
        <position position="99"/>
    </location>
    <ligand>
        <name>Zn(2+)</name>
        <dbReference type="ChEBI" id="CHEBI:29105"/>
        <label>2</label>
    </ligand>
</feature>
<feature type="binding site" evidence="1">
    <location>
        <position position="134"/>
    </location>
    <ligand>
        <name>Zn(2+)</name>
        <dbReference type="ChEBI" id="CHEBI:29105"/>
        <label>2</label>
    </ligand>
</feature>
<feature type="binding site" evidence="1">
    <location>
        <position position="162"/>
    </location>
    <ligand>
        <name>Zn(2+)</name>
        <dbReference type="ChEBI" id="CHEBI:29105"/>
        <label>1</label>
    </ligand>
</feature>
<feature type="binding site" evidence="1">
    <location>
        <position position="348"/>
    </location>
    <ligand>
        <name>Zn(2+)</name>
        <dbReference type="ChEBI" id="CHEBI:29105"/>
        <label>2</label>
    </ligand>
</feature>
<comment type="function">
    <text evidence="1">Catalyzes the hydrolysis of N-succinyl-L,L-diaminopimelic acid (SDAP), forming succinate and LL-2,6-diaminopimelate (DAP), an intermediate involved in the bacterial biosynthesis of lysine and meso-diaminopimelic acid, an essential component of bacterial cell walls.</text>
</comment>
<comment type="catalytic activity">
    <reaction evidence="1">
        <text>N-succinyl-(2S,6S)-2,6-diaminopimelate + H2O = (2S,6S)-2,6-diaminopimelate + succinate</text>
        <dbReference type="Rhea" id="RHEA:22608"/>
        <dbReference type="ChEBI" id="CHEBI:15377"/>
        <dbReference type="ChEBI" id="CHEBI:30031"/>
        <dbReference type="ChEBI" id="CHEBI:57609"/>
        <dbReference type="ChEBI" id="CHEBI:58087"/>
        <dbReference type="EC" id="3.5.1.18"/>
    </reaction>
</comment>
<comment type="cofactor">
    <cofactor evidence="1">
        <name>Zn(2+)</name>
        <dbReference type="ChEBI" id="CHEBI:29105"/>
    </cofactor>
    <cofactor evidence="1">
        <name>Co(2+)</name>
        <dbReference type="ChEBI" id="CHEBI:48828"/>
    </cofactor>
    <text evidence="1">Binds 2 Zn(2+) or Co(2+) ions per subunit.</text>
</comment>
<comment type="pathway">
    <text evidence="1">Amino-acid biosynthesis; L-lysine biosynthesis via DAP pathway; LL-2,6-diaminopimelate from (S)-tetrahydrodipicolinate (succinylase route): step 3/3.</text>
</comment>
<comment type="subunit">
    <text evidence="1">Homodimer.</text>
</comment>
<comment type="similarity">
    <text evidence="1">Belongs to the peptidase M20A family. DapE subfamily.</text>
</comment>
<dbReference type="EC" id="3.5.1.18" evidence="1"/>
<dbReference type="EMBL" id="CP001011">
    <property type="protein sequence ID" value="ACB91538.1"/>
    <property type="molecule type" value="Genomic_DNA"/>
</dbReference>
<dbReference type="RefSeq" id="WP_011097497.1">
    <property type="nucleotide sequence ID" value="NC_010577.1"/>
</dbReference>
<dbReference type="SMR" id="B2I6B4"/>
<dbReference type="KEGG" id="xfn:XfasM23_0081"/>
<dbReference type="HOGENOM" id="CLU_021802_4_0_6"/>
<dbReference type="UniPathway" id="UPA00034">
    <property type="reaction ID" value="UER00021"/>
</dbReference>
<dbReference type="Proteomes" id="UP000001698">
    <property type="component" value="Chromosome"/>
</dbReference>
<dbReference type="GO" id="GO:0008777">
    <property type="term" value="F:acetylornithine deacetylase activity"/>
    <property type="evidence" value="ECO:0007669"/>
    <property type="project" value="TreeGrafter"/>
</dbReference>
<dbReference type="GO" id="GO:0050897">
    <property type="term" value="F:cobalt ion binding"/>
    <property type="evidence" value="ECO:0007669"/>
    <property type="project" value="UniProtKB-UniRule"/>
</dbReference>
<dbReference type="GO" id="GO:0009014">
    <property type="term" value="F:succinyl-diaminopimelate desuccinylase activity"/>
    <property type="evidence" value="ECO:0007669"/>
    <property type="project" value="UniProtKB-UniRule"/>
</dbReference>
<dbReference type="GO" id="GO:0008270">
    <property type="term" value="F:zinc ion binding"/>
    <property type="evidence" value="ECO:0007669"/>
    <property type="project" value="UniProtKB-UniRule"/>
</dbReference>
<dbReference type="GO" id="GO:0019877">
    <property type="term" value="P:diaminopimelate biosynthetic process"/>
    <property type="evidence" value="ECO:0007669"/>
    <property type="project" value="UniProtKB-UniRule"/>
</dbReference>
<dbReference type="GO" id="GO:0006526">
    <property type="term" value="P:L-arginine biosynthetic process"/>
    <property type="evidence" value="ECO:0007669"/>
    <property type="project" value="TreeGrafter"/>
</dbReference>
<dbReference type="GO" id="GO:0009089">
    <property type="term" value="P:lysine biosynthetic process via diaminopimelate"/>
    <property type="evidence" value="ECO:0007669"/>
    <property type="project" value="UniProtKB-UniRule"/>
</dbReference>
<dbReference type="CDD" id="cd03891">
    <property type="entry name" value="M20_DapE_proteobac"/>
    <property type="match status" value="1"/>
</dbReference>
<dbReference type="FunFam" id="3.40.630.10:FF:000005">
    <property type="entry name" value="Succinyl-diaminopimelate desuccinylase"/>
    <property type="match status" value="1"/>
</dbReference>
<dbReference type="Gene3D" id="3.40.630.10">
    <property type="entry name" value="Zn peptidases"/>
    <property type="match status" value="2"/>
</dbReference>
<dbReference type="HAMAP" id="MF_01690">
    <property type="entry name" value="DapE"/>
    <property type="match status" value="1"/>
</dbReference>
<dbReference type="InterPro" id="IPR001261">
    <property type="entry name" value="ArgE/DapE_CS"/>
</dbReference>
<dbReference type="InterPro" id="IPR036264">
    <property type="entry name" value="Bact_exopeptidase_dim_dom"/>
</dbReference>
<dbReference type="InterPro" id="IPR005941">
    <property type="entry name" value="DapE_proteobac"/>
</dbReference>
<dbReference type="InterPro" id="IPR002933">
    <property type="entry name" value="Peptidase_M20"/>
</dbReference>
<dbReference type="InterPro" id="IPR011650">
    <property type="entry name" value="Peptidase_M20_dimer"/>
</dbReference>
<dbReference type="InterPro" id="IPR050072">
    <property type="entry name" value="Peptidase_M20A"/>
</dbReference>
<dbReference type="NCBIfam" id="TIGR01246">
    <property type="entry name" value="dapE_proteo"/>
    <property type="match status" value="1"/>
</dbReference>
<dbReference type="NCBIfam" id="NF009557">
    <property type="entry name" value="PRK13009.1"/>
    <property type="match status" value="1"/>
</dbReference>
<dbReference type="PANTHER" id="PTHR43808">
    <property type="entry name" value="ACETYLORNITHINE DEACETYLASE"/>
    <property type="match status" value="1"/>
</dbReference>
<dbReference type="PANTHER" id="PTHR43808:SF31">
    <property type="entry name" value="N-ACETYL-L-CITRULLINE DEACETYLASE"/>
    <property type="match status" value="1"/>
</dbReference>
<dbReference type="Pfam" id="PF07687">
    <property type="entry name" value="M20_dimer"/>
    <property type="match status" value="1"/>
</dbReference>
<dbReference type="Pfam" id="PF01546">
    <property type="entry name" value="Peptidase_M20"/>
    <property type="match status" value="1"/>
</dbReference>
<dbReference type="SUPFAM" id="SSF55031">
    <property type="entry name" value="Bacterial exopeptidase dimerisation domain"/>
    <property type="match status" value="1"/>
</dbReference>
<dbReference type="SUPFAM" id="SSF53187">
    <property type="entry name" value="Zn-dependent exopeptidases"/>
    <property type="match status" value="1"/>
</dbReference>
<dbReference type="PROSITE" id="PS00759">
    <property type="entry name" value="ARGE_DAPE_CPG2_2"/>
    <property type="match status" value="1"/>
</dbReference>
<evidence type="ECO:0000255" key="1">
    <source>
        <dbReference type="HAMAP-Rule" id="MF_01690"/>
    </source>
</evidence>
<protein>
    <recommendedName>
        <fullName evidence="1">Succinyl-diaminopimelate desuccinylase</fullName>
        <shortName evidence="1">SDAP desuccinylase</shortName>
        <ecNumber evidence="1">3.5.1.18</ecNumber>
    </recommendedName>
    <alternativeName>
        <fullName evidence="1">N-succinyl-LL-2,6-diaminoheptanedioate amidohydrolase</fullName>
    </alternativeName>
</protein>
<name>DAPE_XYLF2</name>
<accession>B2I6B4</accession>
<proteinExistence type="inferred from homology"/>
<sequence>MSDVLDLACDLISRPSMTPDDAGCQEMIAKRLERAGFICEHLRYAAVSNLWATHGRGAPVLVLLGHTDVVPPGPVEAWTSDPFMPDMRNGILYGRGAADMKGSVAAFVIAAERFLAAYPQHPGTLAILLTSDEEGQAIDGVRKVAETLRQRGQGIDWCLTGEPSSSKRLGDLLRVGRRGSLSATLHVKGVQGHVAYPHQARNPIHLALPAFAALTARHWDDGYESFPSTSLQISNIHAGTGANNVIPGALEVAFNLRYNPHWIAPRLESEIVALLDQHGLDYTLHWHRSGEPFYTPEGKLRRIAREVLERFSGAPPEESTGGGTSDARFIAPLGAQCIEVGPVNASIHQVDEHVCLSDLEALPDLYQLLIERLLAEH</sequence>